<gene>
    <name evidence="1" type="primary">aroC</name>
    <name type="ordered locus">BMA10229_A0401</name>
</gene>
<protein>
    <recommendedName>
        <fullName evidence="1">Chorismate synthase</fullName>
        <shortName evidence="1">CS</shortName>
        <ecNumber evidence="1">4.2.3.5</ecNumber>
    </recommendedName>
    <alternativeName>
        <fullName evidence="1">5-enolpyruvylshikimate-3-phosphate phospholyase</fullName>
    </alternativeName>
</protein>
<evidence type="ECO:0000255" key="1">
    <source>
        <dbReference type="HAMAP-Rule" id="MF_00300"/>
    </source>
</evidence>
<evidence type="ECO:0000305" key="2"/>
<sequence length="369" mass="39265">MSGNTLGTLFTVTTFGESHGPAIGCVIDGCPPGMALTEADVQLELDRRKPGTSRHVTQRQEPDQVEILSGVFEGVTTGAPIALLIRNTDQRSKDYGNIAETFRPGHADYTYWQKYGVRDYRGGGRSSARLTAPVVGAGAIAKKWLCERFGVEVRGYMSALGEIEIPFVDWSHVRENPFFAPNADIVPQLEDYMDALRKDGDSIGARIDVVASGVPVGWGEPLFDRLDADIAHAMMGINAVKGVEIGAGFASVAQRGSVHGDELTPDGFVGNHAGGVLGGISTGQDITVSIAIKPTSSIRTPRRSITRAGEPAVVETFGRHDPCVGIRATPIAESMLALVLIDHALRHRAQCGDVSSATPRIAARAPDAQ</sequence>
<dbReference type="EC" id="4.2.3.5" evidence="1"/>
<dbReference type="EMBL" id="CP000546">
    <property type="protein sequence ID" value="ABN01151.1"/>
    <property type="status" value="ALT_INIT"/>
    <property type="molecule type" value="Genomic_DNA"/>
</dbReference>
<dbReference type="RefSeq" id="WP_011832201.1">
    <property type="nucleotide sequence ID" value="NC_008836.1"/>
</dbReference>
<dbReference type="SMR" id="A2S381"/>
<dbReference type="KEGG" id="bml:BMA10229_A0401"/>
<dbReference type="HOGENOM" id="CLU_034547_0_2_4"/>
<dbReference type="UniPathway" id="UPA00053">
    <property type="reaction ID" value="UER00090"/>
</dbReference>
<dbReference type="Proteomes" id="UP000002283">
    <property type="component" value="Chromosome I"/>
</dbReference>
<dbReference type="GO" id="GO:0005829">
    <property type="term" value="C:cytosol"/>
    <property type="evidence" value="ECO:0007669"/>
    <property type="project" value="TreeGrafter"/>
</dbReference>
<dbReference type="GO" id="GO:0004107">
    <property type="term" value="F:chorismate synthase activity"/>
    <property type="evidence" value="ECO:0007669"/>
    <property type="project" value="UniProtKB-UniRule"/>
</dbReference>
<dbReference type="GO" id="GO:0010181">
    <property type="term" value="F:FMN binding"/>
    <property type="evidence" value="ECO:0007669"/>
    <property type="project" value="TreeGrafter"/>
</dbReference>
<dbReference type="GO" id="GO:0008652">
    <property type="term" value="P:amino acid biosynthetic process"/>
    <property type="evidence" value="ECO:0007669"/>
    <property type="project" value="UniProtKB-KW"/>
</dbReference>
<dbReference type="GO" id="GO:0009073">
    <property type="term" value="P:aromatic amino acid family biosynthetic process"/>
    <property type="evidence" value="ECO:0007669"/>
    <property type="project" value="UniProtKB-KW"/>
</dbReference>
<dbReference type="GO" id="GO:0009423">
    <property type="term" value="P:chorismate biosynthetic process"/>
    <property type="evidence" value="ECO:0007669"/>
    <property type="project" value="UniProtKB-UniRule"/>
</dbReference>
<dbReference type="CDD" id="cd07304">
    <property type="entry name" value="Chorismate_synthase"/>
    <property type="match status" value="1"/>
</dbReference>
<dbReference type="FunFam" id="3.60.150.10:FF:000001">
    <property type="entry name" value="Chorismate synthase"/>
    <property type="match status" value="1"/>
</dbReference>
<dbReference type="Gene3D" id="3.60.150.10">
    <property type="entry name" value="Chorismate synthase AroC"/>
    <property type="match status" value="1"/>
</dbReference>
<dbReference type="HAMAP" id="MF_00300">
    <property type="entry name" value="Chorismate_synth"/>
    <property type="match status" value="1"/>
</dbReference>
<dbReference type="InterPro" id="IPR000453">
    <property type="entry name" value="Chorismate_synth"/>
</dbReference>
<dbReference type="InterPro" id="IPR035904">
    <property type="entry name" value="Chorismate_synth_AroC_sf"/>
</dbReference>
<dbReference type="InterPro" id="IPR020541">
    <property type="entry name" value="Chorismate_synthase_CS"/>
</dbReference>
<dbReference type="NCBIfam" id="TIGR00033">
    <property type="entry name" value="aroC"/>
    <property type="match status" value="1"/>
</dbReference>
<dbReference type="NCBIfam" id="NF003793">
    <property type="entry name" value="PRK05382.1"/>
    <property type="match status" value="1"/>
</dbReference>
<dbReference type="PANTHER" id="PTHR21085">
    <property type="entry name" value="CHORISMATE SYNTHASE"/>
    <property type="match status" value="1"/>
</dbReference>
<dbReference type="PANTHER" id="PTHR21085:SF0">
    <property type="entry name" value="CHORISMATE SYNTHASE"/>
    <property type="match status" value="1"/>
</dbReference>
<dbReference type="Pfam" id="PF01264">
    <property type="entry name" value="Chorismate_synt"/>
    <property type="match status" value="1"/>
</dbReference>
<dbReference type="PIRSF" id="PIRSF001456">
    <property type="entry name" value="Chorismate_synth"/>
    <property type="match status" value="1"/>
</dbReference>
<dbReference type="SUPFAM" id="SSF103263">
    <property type="entry name" value="Chorismate synthase, AroC"/>
    <property type="match status" value="1"/>
</dbReference>
<dbReference type="PROSITE" id="PS00787">
    <property type="entry name" value="CHORISMATE_SYNTHASE_1"/>
    <property type="match status" value="1"/>
</dbReference>
<dbReference type="PROSITE" id="PS00788">
    <property type="entry name" value="CHORISMATE_SYNTHASE_2"/>
    <property type="match status" value="1"/>
</dbReference>
<dbReference type="PROSITE" id="PS00789">
    <property type="entry name" value="CHORISMATE_SYNTHASE_3"/>
    <property type="match status" value="1"/>
</dbReference>
<name>AROC_BURM9</name>
<comment type="function">
    <text evidence="1">Catalyzes the anti-1,4-elimination of the C-3 phosphate and the C-6 proR hydrogen from 5-enolpyruvylshikimate-3-phosphate (EPSP) to yield chorismate, which is the branch point compound that serves as the starting substrate for the three terminal pathways of aromatic amino acid biosynthesis. This reaction introduces a second double bond into the aromatic ring system.</text>
</comment>
<comment type="catalytic activity">
    <reaction evidence="1">
        <text>5-O-(1-carboxyvinyl)-3-phosphoshikimate = chorismate + phosphate</text>
        <dbReference type="Rhea" id="RHEA:21020"/>
        <dbReference type="ChEBI" id="CHEBI:29748"/>
        <dbReference type="ChEBI" id="CHEBI:43474"/>
        <dbReference type="ChEBI" id="CHEBI:57701"/>
        <dbReference type="EC" id="4.2.3.5"/>
    </reaction>
</comment>
<comment type="cofactor">
    <cofactor evidence="1">
        <name>FMNH2</name>
        <dbReference type="ChEBI" id="CHEBI:57618"/>
    </cofactor>
    <text evidence="1">Reduced FMN (FMNH(2)).</text>
</comment>
<comment type="pathway">
    <text evidence="1">Metabolic intermediate biosynthesis; chorismate biosynthesis; chorismate from D-erythrose 4-phosphate and phosphoenolpyruvate: step 7/7.</text>
</comment>
<comment type="subunit">
    <text evidence="1">Homotetramer.</text>
</comment>
<comment type="similarity">
    <text evidence="1">Belongs to the chorismate synthase family.</text>
</comment>
<comment type="sequence caution" evidence="2">
    <conflict type="erroneous initiation">
        <sequence resource="EMBL-CDS" id="ABN01151"/>
    </conflict>
    <text>Extended N-terminus.</text>
</comment>
<reference key="1">
    <citation type="journal article" date="2010" name="Genome Biol. Evol.">
        <title>Continuing evolution of Burkholderia mallei through genome reduction and large-scale rearrangements.</title>
        <authorList>
            <person name="Losada L."/>
            <person name="Ronning C.M."/>
            <person name="DeShazer D."/>
            <person name="Woods D."/>
            <person name="Fedorova N."/>
            <person name="Kim H.S."/>
            <person name="Shabalina S.A."/>
            <person name="Pearson T.R."/>
            <person name="Brinkac L."/>
            <person name="Tan P."/>
            <person name="Nandi T."/>
            <person name="Crabtree J."/>
            <person name="Badger J."/>
            <person name="Beckstrom-Sternberg S."/>
            <person name="Saqib M."/>
            <person name="Schutzer S.E."/>
            <person name="Keim P."/>
            <person name="Nierman W.C."/>
        </authorList>
    </citation>
    <scope>NUCLEOTIDE SEQUENCE [LARGE SCALE GENOMIC DNA]</scope>
    <source>
        <strain>NCTC 10229</strain>
    </source>
</reference>
<proteinExistence type="inferred from homology"/>
<accession>A2S381</accession>
<organism>
    <name type="scientific">Burkholderia mallei (strain NCTC 10229)</name>
    <dbReference type="NCBI Taxonomy" id="412022"/>
    <lineage>
        <taxon>Bacteria</taxon>
        <taxon>Pseudomonadati</taxon>
        <taxon>Pseudomonadota</taxon>
        <taxon>Betaproteobacteria</taxon>
        <taxon>Burkholderiales</taxon>
        <taxon>Burkholderiaceae</taxon>
        <taxon>Burkholderia</taxon>
        <taxon>pseudomallei group</taxon>
    </lineage>
</organism>
<feature type="chain" id="PRO_0000322392" description="Chorismate synthase">
    <location>
        <begin position="1"/>
        <end position="369"/>
    </location>
</feature>
<feature type="binding site" evidence="1">
    <location>
        <position position="48"/>
    </location>
    <ligand>
        <name>NADP(+)</name>
        <dbReference type="ChEBI" id="CHEBI:58349"/>
    </ligand>
</feature>
<feature type="binding site" evidence="1">
    <location>
        <position position="54"/>
    </location>
    <ligand>
        <name>NADP(+)</name>
        <dbReference type="ChEBI" id="CHEBI:58349"/>
    </ligand>
</feature>
<feature type="binding site" evidence="1">
    <location>
        <begin position="125"/>
        <end position="127"/>
    </location>
    <ligand>
        <name>FMN</name>
        <dbReference type="ChEBI" id="CHEBI:58210"/>
    </ligand>
</feature>
<feature type="binding site" evidence="1">
    <location>
        <begin position="238"/>
        <end position="239"/>
    </location>
    <ligand>
        <name>FMN</name>
        <dbReference type="ChEBI" id="CHEBI:58210"/>
    </ligand>
</feature>
<feature type="binding site" evidence="1">
    <location>
        <position position="278"/>
    </location>
    <ligand>
        <name>FMN</name>
        <dbReference type="ChEBI" id="CHEBI:58210"/>
    </ligand>
</feature>
<feature type="binding site" evidence="1">
    <location>
        <begin position="293"/>
        <end position="297"/>
    </location>
    <ligand>
        <name>FMN</name>
        <dbReference type="ChEBI" id="CHEBI:58210"/>
    </ligand>
</feature>
<feature type="binding site" evidence="1">
    <location>
        <position position="319"/>
    </location>
    <ligand>
        <name>FMN</name>
        <dbReference type="ChEBI" id="CHEBI:58210"/>
    </ligand>
</feature>
<keyword id="KW-0028">Amino-acid biosynthesis</keyword>
<keyword id="KW-0057">Aromatic amino acid biosynthesis</keyword>
<keyword id="KW-0274">FAD</keyword>
<keyword id="KW-0285">Flavoprotein</keyword>
<keyword id="KW-0288">FMN</keyword>
<keyword id="KW-0456">Lyase</keyword>
<keyword id="KW-0521">NADP</keyword>